<organism>
    <name type="scientific">Enterobacteria phage T4</name>
    <name type="common">Bacteriophage T4</name>
    <dbReference type="NCBI Taxonomy" id="10665"/>
    <lineage>
        <taxon>Viruses</taxon>
        <taxon>Duplodnaviria</taxon>
        <taxon>Heunggongvirae</taxon>
        <taxon>Uroviricota</taxon>
        <taxon>Caudoviricetes</taxon>
        <taxon>Straboviridae</taxon>
        <taxon>Tevenvirinae</taxon>
        <taxon>Tequatrovirus</taxon>
    </lineage>
</organism>
<reference key="1">
    <citation type="journal article" date="1986" name="Nucleic Acids Res.">
        <title>The 52-protein subunit of T4 DNA topoisomerase is homologous to the gyrA-protein of gyrase.</title>
        <authorList>
            <person name="Huang W.M."/>
        </authorList>
    </citation>
    <scope>NUCLEOTIDE SEQUENCE [GENOMIC DNA]</scope>
</reference>
<reference key="2">
    <citation type="submission" date="1995-03" db="EMBL/GenBank/DDBJ databases">
        <authorList>
            <person name="Huang W.M."/>
        </authorList>
    </citation>
    <scope>SEQUENCE REVISION</scope>
</reference>
<reference key="3">
    <citation type="journal article" date="2003" name="Microbiol. Mol. Biol. Rev.">
        <title>Bacteriophage T4 genome.</title>
        <authorList>
            <person name="Miller E.S."/>
            <person name="Kutter E."/>
            <person name="Mosig G."/>
            <person name="Arisaka F."/>
            <person name="Kunisawa T."/>
            <person name="Ruger W."/>
        </authorList>
    </citation>
    <scope>NUCLEOTIDE SEQUENCE [LARGE SCALE GENOMIC DNA]</scope>
</reference>
<reference key="4">
    <citation type="journal article" date="1988" name="J. Mol. Biol.">
        <title>Nucleotide and deduced amino acid sequence of stp: the bacteriophage T4 anticodon nuclease gene.</title>
        <authorList>
            <person name="Chapman D."/>
            <person name="Morad I."/>
            <person name="Kaufmann G."/>
            <person name="Gait M.J."/>
            <person name="Jorissen L."/>
            <person name="Snyder L."/>
        </authorList>
    </citation>
    <scope>NUCLEOTIDE SEQUENCE [GENOMIC DNA] OF 1-46</scope>
</reference>
<reference key="5">
    <citation type="journal article" date="1979" name="Proc. Natl. Acad. Sci. U.S.A.">
        <title>T4 DNA-delay proteins, required for specific DNA replication, form a complex that has ATP-dependent DNA topoisomerase activity.</title>
        <authorList>
            <person name="Stetler G.L."/>
            <person name="King G.J."/>
            <person name="Huang W.M."/>
        </authorList>
    </citation>
    <scope>IDENTIFICATION IN THE DNA TOPOISOMERASE COMPLEX</scope>
    <scope>CATALYTIC ACTIVITY</scope>
    <scope>FUNCTION</scope>
</reference>
<reference key="6">
    <citation type="journal article" date="1983" name="J. Biol. Chem.">
        <title>Identification of bacteriophage T4 gene 60 product and a role for this protein in DNA topoisomerase.</title>
        <authorList>
            <person name="Seasholtz A.F."/>
            <person name="Greenberg G.R."/>
        </authorList>
    </citation>
    <scope>IDENTIFICATION IN THE DNA TOPOISOMERASE COMPLEX</scope>
</reference>
<keyword id="KW-0002">3D-structure</keyword>
<keyword id="KW-0067">ATP-binding</keyword>
<keyword id="KW-0238">DNA-binding</keyword>
<keyword id="KW-0413">Isomerase</keyword>
<keyword id="KW-0547">Nucleotide-binding</keyword>
<keyword id="KW-1185">Reference proteome</keyword>
<keyword id="KW-0799">Topoisomerase</keyword>
<accession>P07065</accession>
<dbReference type="EC" id="5.6.2.2" evidence="2"/>
<dbReference type="EMBL" id="X04376">
    <property type="protein sequence ID" value="CAA27959.1"/>
    <property type="molecule type" value="Genomic_DNA"/>
</dbReference>
<dbReference type="EMBL" id="AF158101">
    <property type="protein sequence ID" value="AAD42487.1"/>
    <property type="molecule type" value="Genomic_DNA"/>
</dbReference>
<dbReference type="PIR" id="B24705">
    <property type="entry name" value="ITBPT4"/>
</dbReference>
<dbReference type="RefSeq" id="NP_049875.1">
    <property type="nucleotide sequence ID" value="NC_000866.4"/>
</dbReference>
<dbReference type="PDB" id="8YLU">
    <property type="method" value="EM"/>
    <property type="resolution" value="2.80 A"/>
    <property type="chains" value="A/B=1-442"/>
</dbReference>
<dbReference type="PDB" id="8YO3">
    <property type="method" value="EM"/>
    <property type="resolution" value="3.62 A"/>
    <property type="chains" value="A/B=1-442"/>
</dbReference>
<dbReference type="PDB" id="8YO4">
    <property type="method" value="EM"/>
    <property type="resolution" value="3.20 A"/>
    <property type="chains" value="A/B=1-442"/>
</dbReference>
<dbReference type="PDB" id="8YO5">
    <property type="method" value="EM"/>
    <property type="resolution" value="3.93 A"/>
    <property type="chains" value="A/B=1-442"/>
</dbReference>
<dbReference type="PDB" id="8YO7">
    <property type="method" value="EM"/>
    <property type="resolution" value="3.16 A"/>
    <property type="chains" value="A/B=1-442"/>
</dbReference>
<dbReference type="PDB" id="8YO9">
    <property type="method" value="EM"/>
    <property type="resolution" value="6.12 A"/>
    <property type="chains" value="A/B=1-442"/>
</dbReference>
<dbReference type="PDB" id="8YOD">
    <property type="method" value="EM"/>
    <property type="resolution" value="6.80 A"/>
    <property type="chains" value="A/B=1-442"/>
</dbReference>
<dbReference type="PDB" id="8YON">
    <property type="method" value="EM"/>
    <property type="resolution" value="6.73 A"/>
    <property type="chains" value="A/B=1-442"/>
</dbReference>
<dbReference type="PDBsum" id="8YLU"/>
<dbReference type="PDBsum" id="8YO3"/>
<dbReference type="PDBsum" id="8YO4"/>
<dbReference type="PDBsum" id="8YO5"/>
<dbReference type="PDBsum" id="8YO7"/>
<dbReference type="PDBsum" id="8YO9"/>
<dbReference type="PDBsum" id="8YOD"/>
<dbReference type="PDBsum" id="8YON"/>
<dbReference type="EMDB" id="EMD-39391"/>
<dbReference type="EMDB" id="EMD-39434"/>
<dbReference type="EMDB" id="EMD-39435"/>
<dbReference type="EMDB" id="EMD-39436"/>
<dbReference type="EMDB" id="EMD-39437"/>
<dbReference type="EMDB" id="EMD-39438"/>
<dbReference type="EMDB" id="EMD-39444"/>
<dbReference type="EMDB" id="EMD-39454"/>
<dbReference type="SMR" id="P07065"/>
<dbReference type="GeneID" id="1258768"/>
<dbReference type="KEGG" id="vg:1258768"/>
<dbReference type="OrthoDB" id="2392at10239"/>
<dbReference type="Proteomes" id="UP000009087">
    <property type="component" value="Segment"/>
</dbReference>
<dbReference type="GO" id="GO:0032991">
    <property type="term" value="C:protein-containing complex"/>
    <property type="evidence" value="ECO:0000314"/>
    <property type="project" value="UniProtKB"/>
</dbReference>
<dbReference type="GO" id="GO:0005524">
    <property type="term" value="F:ATP binding"/>
    <property type="evidence" value="ECO:0007669"/>
    <property type="project" value="UniProtKB-KW"/>
</dbReference>
<dbReference type="GO" id="GO:0003677">
    <property type="term" value="F:DNA binding"/>
    <property type="evidence" value="ECO:0007669"/>
    <property type="project" value="UniProtKB-KW"/>
</dbReference>
<dbReference type="GO" id="GO:0003918">
    <property type="term" value="F:DNA topoisomerase type II (double strand cut, ATP-hydrolyzing) activity"/>
    <property type="evidence" value="ECO:0007669"/>
    <property type="project" value="UniProtKB-EC"/>
</dbReference>
<dbReference type="GO" id="GO:0006265">
    <property type="term" value="P:DNA topological change"/>
    <property type="evidence" value="ECO:0007669"/>
    <property type="project" value="InterPro"/>
</dbReference>
<dbReference type="GO" id="GO:0000819">
    <property type="term" value="P:sister chromatid segregation"/>
    <property type="evidence" value="ECO:0007669"/>
    <property type="project" value="TreeGrafter"/>
</dbReference>
<dbReference type="Gene3D" id="3.30.1360.40">
    <property type="match status" value="1"/>
</dbReference>
<dbReference type="Gene3D" id="3.90.199.10">
    <property type="entry name" value="Topoisomerase II, domain 5"/>
    <property type="match status" value="1"/>
</dbReference>
<dbReference type="Gene3D" id="1.10.268.10">
    <property type="entry name" value="Topoisomerase, domain 3"/>
    <property type="match status" value="1"/>
</dbReference>
<dbReference type="InterPro" id="IPR050634">
    <property type="entry name" value="DNA_Topoisomerase_II"/>
</dbReference>
<dbReference type="InterPro" id="IPR013760">
    <property type="entry name" value="Topo_IIA-like_dom_sf"/>
</dbReference>
<dbReference type="InterPro" id="IPR013758">
    <property type="entry name" value="Topo_IIA_A/C_ab"/>
</dbReference>
<dbReference type="InterPro" id="IPR013757">
    <property type="entry name" value="Topo_IIA_A_a_sf"/>
</dbReference>
<dbReference type="InterPro" id="IPR002205">
    <property type="entry name" value="Topo_IIA_dom_A"/>
</dbReference>
<dbReference type="InterPro" id="IPR001154">
    <property type="entry name" value="TopoII_euk"/>
</dbReference>
<dbReference type="PANTHER" id="PTHR10169:SF38">
    <property type="entry name" value="DNA TOPOISOMERASE 2"/>
    <property type="match status" value="1"/>
</dbReference>
<dbReference type="PANTHER" id="PTHR10169">
    <property type="entry name" value="DNA TOPOISOMERASE/GYRASE"/>
    <property type="match status" value="1"/>
</dbReference>
<dbReference type="Pfam" id="PF00521">
    <property type="entry name" value="DNA_topoisoIV"/>
    <property type="match status" value="1"/>
</dbReference>
<dbReference type="PRINTS" id="PR01158">
    <property type="entry name" value="TOPISMRASEII"/>
</dbReference>
<dbReference type="SMART" id="SM00434">
    <property type="entry name" value="TOP4c"/>
    <property type="match status" value="1"/>
</dbReference>
<dbReference type="SUPFAM" id="SSF56719">
    <property type="entry name" value="Type II DNA topoisomerase"/>
    <property type="match status" value="1"/>
</dbReference>
<dbReference type="PROSITE" id="PS52040">
    <property type="entry name" value="TOPO_IIA"/>
    <property type="match status" value="1"/>
</dbReference>
<comment type="function">
    <text evidence="2">Medium subunit of the DNA topoisomerase that untwists superhelical DNA. Controls topological states of double-stranded DNA by transient breakage and subsequent rejoining of DNA strands.</text>
</comment>
<comment type="catalytic activity">
    <reaction evidence="2">
        <text>ATP-dependent breakage, passage and rejoining of double-stranded DNA.</text>
        <dbReference type="EC" id="5.6.2.2"/>
    </reaction>
</comment>
<comment type="cofactor">
    <cofactor evidence="2">
        <name>Mg(2+)</name>
        <dbReference type="ChEBI" id="CHEBI:18420"/>
    </cofactor>
</comment>
<comment type="subunit">
    <text evidence="2 3">Part of the DNA topoisomerase complex made of gp39, gp52 and gp60.</text>
</comment>
<comment type="similarity">
    <text evidence="4">Belongs to the type II topoisomerase family.</text>
</comment>
<evidence type="ECO:0000255" key="1">
    <source>
        <dbReference type="PROSITE-ProRule" id="PRU01384"/>
    </source>
</evidence>
<evidence type="ECO:0000269" key="2">
    <source>
    </source>
</evidence>
<evidence type="ECO:0000269" key="3">
    <source>
    </source>
</evidence>
<evidence type="ECO:0000305" key="4"/>
<protein>
    <recommendedName>
        <fullName>DNA topoisomerase medium subunit</fullName>
        <ecNumber evidence="2">5.6.2.2</ecNumber>
    </recommendedName>
    <alternativeName>
        <fullName>DNA topoisomerase 51-kDa subunit</fullName>
    </alternativeName>
    <alternativeName>
        <fullName>Protein Gp52</fullName>
    </alternativeName>
</protein>
<gene>
    <name type="primary">52</name>
</gene>
<organismHost>
    <name type="scientific">Escherichia coli</name>
    <dbReference type="NCBI Taxonomy" id="562"/>
</organismHost>
<sequence length="442" mass="50494">MQLNNRDLKSIIDNEALAYAMYTVENRAIPNMIDGFKPVQRFVIARALDLARGNKDKFHKLASIAGGVADLGYHHGENSAQDAGALMANTWNNNFPLLDGQGNFGSRTVQKAAASRYIFARVSKNFYNVYKDTEYAPVHQDKEHIPPAFYLPIIPTVLLNGVSGIATGYATYILPHSVSSVKKAVLQALQGKKVTKPKVEFPEFRGEVVEIDGQYEIRGTYKFTSRTQMHITEIPYKYDRETYVSKILDPLENKGFITWDDACGEHGFGFKVKFRKEYSLSDNEEERHAKIMKDFGLIERRSQNITVINEKGKLQVYDNVVDLIKDFVEVRKTYVQKRIDNKIKETESAFRLAFAKAHFIKKVISGEIVVQGKTRKELTEELSKIDMYSSYVDKLVGMNIFHMTSDEAKKLAEEAKAKKEENEYWKTTDVVTEYTKDLEEIK</sequence>
<proteinExistence type="evidence at protein level"/>
<feature type="chain" id="PRO_0000145391" description="DNA topoisomerase medium subunit">
    <location>
        <begin position="1"/>
        <end position="442"/>
    </location>
</feature>
<feature type="domain" description="Topo IIA-type catalytic" evidence="1">
    <location>
        <begin position="29"/>
        <end position="438"/>
    </location>
</feature>
<feature type="active site" description="O-(5'-phospho-DNA)-tyrosine intermediate" evidence="1">
    <location>
        <position position="117"/>
    </location>
</feature>
<name>TOP5_BPT4</name>